<comment type="function">
    <text evidence="1">The RuvA-RuvB-RuvC complex processes Holliday junction (HJ) DNA during genetic recombination and DNA repair, while the RuvA-RuvB complex plays an important role in the rescue of blocked DNA replication forks via replication fork reversal (RFR). RuvA specifically binds to HJ cruciform DNA, conferring on it an open structure. The RuvB hexamer acts as an ATP-dependent pump, pulling dsDNA into and through the RuvAB complex. RuvB forms 2 homohexamers on either side of HJ DNA bound by 1 or 2 RuvA tetramers; 4 subunits per hexamer contact DNA at a time. Coordinated motions by a converter formed by DNA-disengaged RuvB subunits stimulates ATP hydrolysis and nucleotide exchange. Immobilization of the converter enables RuvB to convert the ATP-contained energy into a lever motion, pulling 2 nucleotides of DNA out of the RuvA tetramer per ATP hydrolyzed, thus driving DNA branch migration. The RuvB motors rotate together with the DNA substrate, which together with the progressing nucleotide cycle form the mechanistic basis for DNA recombination by continuous HJ branch migration. Branch migration allows RuvC to scan DNA until it finds its consensus sequence, where it cleaves and resolves cruciform DNA.</text>
</comment>
<comment type="catalytic activity">
    <reaction evidence="1">
        <text>ATP + H2O = ADP + phosphate + H(+)</text>
        <dbReference type="Rhea" id="RHEA:13065"/>
        <dbReference type="ChEBI" id="CHEBI:15377"/>
        <dbReference type="ChEBI" id="CHEBI:15378"/>
        <dbReference type="ChEBI" id="CHEBI:30616"/>
        <dbReference type="ChEBI" id="CHEBI:43474"/>
        <dbReference type="ChEBI" id="CHEBI:456216"/>
    </reaction>
</comment>
<comment type="subunit">
    <text evidence="1">Homohexamer. Forms an RuvA(8)-RuvB(12)-Holliday junction (HJ) complex. HJ DNA is sandwiched between 2 RuvA tetramers; dsDNA enters through RuvA and exits via RuvB. An RuvB hexamer assembles on each DNA strand where it exits the tetramer. Each RuvB hexamer is contacted by two RuvA subunits (via domain III) on 2 adjacent RuvB subunits; this complex drives branch migration. In the full resolvosome a probable DNA-RuvA(4)-RuvB(12)-RuvC(2) complex forms which resolves the HJ.</text>
</comment>
<comment type="subcellular location">
    <subcellularLocation>
        <location evidence="1">Cytoplasm</location>
    </subcellularLocation>
</comment>
<comment type="domain">
    <text evidence="1">Has 3 domains, the large (RuvB-L) and small ATPase (RuvB-S) domains and the C-terminal head (RuvB-H) domain. The head domain binds DNA, while the ATPase domains jointly bind ATP, ADP or are empty depending on the state of the subunit in the translocation cycle. During a single DNA translocation step the structure of each domain remains the same, but their relative positions change.</text>
</comment>
<comment type="similarity">
    <text evidence="1">Belongs to the RuvB family.</text>
</comment>
<evidence type="ECO:0000255" key="1">
    <source>
        <dbReference type="HAMAP-Rule" id="MF_00016"/>
    </source>
</evidence>
<evidence type="ECO:0000256" key="2">
    <source>
        <dbReference type="SAM" id="MobiDB-lite"/>
    </source>
</evidence>
<accession>Q7WGB3</accession>
<dbReference type="EC" id="3.6.4.-" evidence="1"/>
<dbReference type="EMBL" id="BX640449">
    <property type="protein sequence ID" value="CAE34369.1"/>
    <property type="molecule type" value="Genomic_DNA"/>
</dbReference>
<dbReference type="RefSeq" id="WP_003814231.1">
    <property type="nucleotide sequence ID" value="NC_002927.3"/>
</dbReference>
<dbReference type="SMR" id="Q7WGB3"/>
<dbReference type="GeneID" id="56477493"/>
<dbReference type="KEGG" id="bbr:BB4006"/>
<dbReference type="eggNOG" id="COG2255">
    <property type="taxonomic scope" value="Bacteria"/>
</dbReference>
<dbReference type="HOGENOM" id="CLU_055599_1_0_4"/>
<dbReference type="Proteomes" id="UP000001027">
    <property type="component" value="Chromosome"/>
</dbReference>
<dbReference type="GO" id="GO:0005737">
    <property type="term" value="C:cytoplasm"/>
    <property type="evidence" value="ECO:0007669"/>
    <property type="project" value="UniProtKB-SubCell"/>
</dbReference>
<dbReference type="GO" id="GO:0048476">
    <property type="term" value="C:Holliday junction resolvase complex"/>
    <property type="evidence" value="ECO:0007669"/>
    <property type="project" value="UniProtKB-UniRule"/>
</dbReference>
<dbReference type="GO" id="GO:0005524">
    <property type="term" value="F:ATP binding"/>
    <property type="evidence" value="ECO:0007669"/>
    <property type="project" value="UniProtKB-UniRule"/>
</dbReference>
<dbReference type="GO" id="GO:0016887">
    <property type="term" value="F:ATP hydrolysis activity"/>
    <property type="evidence" value="ECO:0007669"/>
    <property type="project" value="InterPro"/>
</dbReference>
<dbReference type="GO" id="GO:0000400">
    <property type="term" value="F:four-way junction DNA binding"/>
    <property type="evidence" value="ECO:0007669"/>
    <property type="project" value="UniProtKB-UniRule"/>
</dbReference>
<dbReference type="GO" id="GO:0009378">
    <property type="term" value="F:four-way junction helicase activity"/>
    <property type="evidence" value="ECO:0007669"/>
    <property type="project" value="InterPro"/>
</dbReference>
<dbReference type="GO" id="GO:0006310">
    <property type="term" value="P:DNA recombination"/>
    <property type="evidence" value="ECO:0007669"/>
    <property type="project" value="UniProtKB-UniRule"/>
</dbReference>
<dbReference type="GO" id="GO:0006281">
    <property type="term" value="P:DNA repair"/>
    <property type="evidence" value="ECO:0007669"/>
    <property type="project" value="UniProtKB-UniRule"/>
</dbReference>
<dbReference type="CDD" id="cd00009">
    <property type="entry name" value="AAA"/>
    <property type="match status" value="1"/>
</dbReference>
<dbReference type="FunFam" id="1.10.10.10:FF:000086">
    <property type="entry name" value="Holliday junction ATP-dependent DNA helicase RuvB"/>
    <property type="match status" value="1"/>
</dbReference>
<dbReference type="FunFam" id="3.40.50.300:FF:000073">
    <property type="entry name" value="Holliday junction ATP-dependent DNA helicase RuvB"/>
    <property type="match status" value="1"/>
</dbReference>
<dbReference type="Gene3D" id="1.10.8.60">
    <property type="match status" value="1"/>
</dbReference>
<dbReference type="Gene3D" id="3.40.50.300">
    <property type="entry name" value="P-loop containing nucleotide triphosphate hydrolases"/>
    <property type="match status" value="1"/>
</dbReference>
<dbReference type="Gene3D" id="1.10.10.10">
    <property type="entry name" value="Winged helix-like DNA-binding domain superfamily/Winged helix DNA-binding domain"/>
    <property type="match status" value="1"/>
</dbReference>
<dbReference type="HAMAP" id="MF_00016">
    <property type="entry name" value="DNA_HJ_migration_RuvB"/>
    <property type="match status" value="1"/>
</dbReference>
<dbReference type="InterPro" id="IPR003593">
    <property type="entry name" value="AAA+_ATPase"/>
</dbReference>
<dbReference type="InterPro" id="IPR041445">
    <property type="entry name" value="AAA_lid_4"/>
</dbReference>
<dbReference type="InterPro" id="IPR004605">
    <property type="entry name" value="DNA_helicase_Holl-junc_RuvB"/>
</dbReference>
<dbReference type="InterPro" id="IPR027417">
    <property type="entry name" value="P-loop_NTPase"/>
</dbReference>
<dbReference type="InterPro" id="IPR008824">
    <property type="entry name" value="RuvB-like_N"/>
</dbReference>
<dbReference type="InterPro" id="IPR008823">
    <property type="entry name" value="RuvB_C"/>
</dbReference>
<dbReference type="InterPro" id="IPR036388">
    <property type="entry name" value="WH-like_DNA-bd_sf"/>
</dbReference>
<dbReference type="InterPro" id="IPR036390">
    <property type="entry name" value="WH_DNA-bd_sf"/>
</dbReference>
<dbReference type="NCBIfam" id="NF000868">
    <property type="entry name" value="PRK00080.1"/>
    <property type="match status" value="1"/>
</dbReference>
<dbReference type="NCBIfam" id="TIGR00635">
    <property type="entry name" value="ruvB"/>
    <property type="match status" value="1"/>
</dbReference>
<dbReference type="PANTHER" id="PTHR42848">
    <property type="match status" value="1"/>
</dbReference>
<dbReference type="PANTHER" id="PTHR42848:SF1">
    <property type="entry name" value="HOLLIDAY JUNCTION BRANCH MIGRATION COMPLEX SUBUNIT RUVB"/>
    <property type="match status" value="1"/>
</dbReference>
<dbReference type="Pfam" id="PF17864">
    <property type="entry name" value="AAA_lid_4"/>
    <property type="match status" value="1"/>
</dbReference>
<dbReference type="Pfam" id="PF05491">
    <property type="entry name" value="RuvB_C"/>
    <property type="match status" value="1"/>
</dbReference>
<dbReference type="Pfam" id="PF05496">
    <property type="entry name" value="RuvB_N"/>
    <property type="match status" value="1"/>
</dbReference>
<dbReference type="SMART" id="SM00382">
    <property type="entry name" value="AAA"/>
    <property type="match status" value="1"/>
</dbReference>
<dbReference type="SUPFAM" id="SSF52540">
    <property type="entry name" value="P-loop containing nucleoside triphosphate hydrolases"/>
    <property type="match status" value="1"/>
</dbReference>
<dbReference type="SUPFAM" id="SSF46785">
    <property type="entry name" value="Winged helix' DNA-binding domain"/>
    <property type="match status" value="1"/>
</dbReference>
<name>RUVB_BORBR</name>
<feature type="chain" id="PRO_0000165499" description="Holliday junction branch migration complex subunit RuvB">
    <location>
        <begin position="1"/>
        <end position="357"/>
    </location>
</feature>
<feature type="region of interest" description="Disordered" evidence="2">
    <location>
        <begin position="1"/>
        <end position="30"/>
    </location>
</feature>
<feature type="region of interest" description="Large ATPase domain (RuvB-L)" evidence="1">
    <location>
        <begin position="13"/>
        <end position="195"/>
    </location>
</feature>
<feature type="region of interest" description="Small ATPAse domain (RuvB-S)" evidence="1">
    <location>
        <begin position="196"/>
        <end position="266"/>
    </location>
</feature>
<feature type="region of interest" description="Head domain (RuvB-H)" evidence="1">
    <location>
        <begin position="269"/>
        <end position="357"/>
    </location>
</feature>
<feature type="compositionally biased region" description="Low complexity" evidence="2">
    <location>
        <begin position="1"/>
        <end position="15"/>
    </location>
</feature>
<feature type="binding site" evidence="1">
    <location>
        <position position="34"/>
    </location>
    <ligand>
        <name>ATP</name>
        <dbReference type="ChEBI" id="CHEBI:30616"/>
    </ligand>
</feature>
<feature type="binding site" evidence="1">
    <location>
        <position position="35"/>
    </location>
    <ligand>
        <name>ATP</name>
        <dbReference type="ChEBI" id="CHEBI:30616"/>
    </ligand>
</feature>
<feature type="binding site" evidence="1">
    <location>
        <position position="76"/>
    </location>
    <ligand>
        <name>ATP</name>
        <dbReference type="ChEBI" id="CHEBI:30616"/>
    </ligand>
</feature>
<feature type="binding site" evidence="1">
    <location>
        <position position="79"/>
    </location>
    <ligand>
        <name>ATP</name>
        <dbReference type="ChEBI" id="CHEBI:30616"/>
    </ligand>
</feature>
<feature type="binding site" evidence="1">
    <location>
        <position position="80"/>
    </location>
    <ligand>
        <name>ATP</name>
        <dbReference type="ChEBI" id="CHEBI:30616"/>
    </ligand>
</feature>
<feature type="binding site" evidence="1">
    <location>
        <position position="80"/>
    </location>
    <ligand>
        <name>Mg(2+)</name>
        <dbReference type="ChEBI" id="CHEBI:18420"/>
    </ligand>
</feature>
<feature type="binding site" evidence="1">
    <location>
        <position position="81"/>
    </location>
    <ligand>
        <name>ATP</name>
        <dbReference type="ChEBI" id="CHEBI:30616"/>
    </ligand>
</feature>
<feature type="binding site" evidence="1">
    <location>
        <begin position="142"/>
        <end position="144"/>
    </location>
    <ligand>
        <name>ATP</name>
        <dbReference type="ChEBI" id="CHEBI:30616"/>
    </ligand>
</feature>
<feature type="binding site" evidence="1">
    <location>
        <position position="185"/>
    </location>
    <ligand>
        <name>ATP</name>
        <dbReference type="ChEBI" id="CHEBI:30616"/>
    </ligand>
</feature>
<feature type="binding site" evidence="1">
    <location>
        <position position="195"/>
    </location>
    <ligand>
        <name>ATP</name>
        <dbReference type="ChEBI" id="CHEBI:30616"/>
    </ligand>
</feature>
<feature type="binding site" evidence="1">
    <location>
        <position position="232"/>
    </location>
    <ligand>
        <name>ATP</name>
        <dbReference type="ChEBI" id="CHEBI:30616"/>
    </ligand>
</feature>
<feature type="binding site" evidence="1">
    <location>
        <position position="305"/>
    </location>
    <ligand>
        <name>DNA</name>
        <dbReference type="ChEBI" id="CHEBI:16991"/>
    </ligand>
</feature>
<feature type="binding site" evidence="1">
    <location>
        <position position="324"/>
    </location>
    <ligand>
        <name>DNA</name>
        <dbReference type="ChEBI" id="CHEBI:16991"/>
    </ligand>
</feature>
<feature type="binding site" evidence="1">
    <location>
        <position position="329"/>
    </location>
    <ligand>
        <name>DNA</name>
        <dbReference type="ChEBI" id="CHEBI:16991"/>
    </ligand>
</feature>
<gene>
    <name evidence="1" type="primary">ruvB</name>
    <name type="ordered locus">BB4006</name>
</gene>
<protein>
    <recommendedName>
        <fullName evidence="1">Holliday junction branch migration complex subunit RuvB</fullName>
        <ecNumber evidence="1">3.6.4.-</ecNumber>
    </recommendedName>
</protein>
<proteinExistence type="inferred from homology"/>
<reference key="1">
    <citation type="journal article" date="2003" name="Nat. Genet.">
        <title>Comparative analysis of the genome sequences of Bordetella pertussis, Bordetella parapertussis and Bordetella bronchiseptica.</title>
        <authorList>
            <person name="Parkhill J."/>
            <person name="Sebaihia M."/>
            <person name="Preston A."/>
            <person name="Murphy L.D."/>
            <person name="Thomson N.R."/>
            <person name="Harris D.E."/>
            <person name="Holden M.T.G."/>
            <person name="Churcher C.M."/>
            <person name="Bentley S.D."/>
            <person name="Mungall K.L."/>
            <person name="Cerdeno-Tarraga A.-M."/>
            <person name="Temple L."/>
            <person name="James K.D."/>
            <person name="Harris B."/>
            <person name="Quail M.A."/>
            <person name="Achtman M."/>
            <person name="Atkin R."/>
            <person name="Baker S."/>
            <person name="Basham D."/>
            <person name="Bason N."/>
            <person name="Cherevach I."/>
            <person name="Chillingworth T."/>
            <person name="Collins M."/>
            <person name="Cronin A."/>
            <person name="Davis P."/>
            <person name="Doggett J."/>
            <person name="Feltwell T."/>
            <person name="Goble A."/>
            <person name="Hamlin N."/>
            <person name="Hauser H."/>
            <person name="Holroyd S."/>
            <person name="Jagels K."/>
            <person name="Leather S."/>
            <person name="Moule S."/>
            <person name="Norberczak H."/>
            <person name="O'Neil S."/>
            <person name="Ormond D."/>
            <person name="Price C."/>
            <person name="Rabbinowitsch E."/>
            <person name="Rutter S."/>
            <person name="Sanders M."/>
            <person name="Saunders D."/>
            <person name="Seeger K."/>
            <person name="Sharp S."/>
            <person name="Simmonds M."/>
            <person name="Skelton J."/>
            <person name="Squares R."/>
            <person name="Squares S."/>
            <person name="Stevens K."/>
            <person name="Unwin L."/>
            <person name="Whitehead S."/>
            <person name="Barrell B.G."/>
            <person name="Maskell D.J."/>
        </authorList>
    </citation>
    <scope>NUCLEOTIDE SEQUENCE [LARGE SCALE GENOMIC DNA]</scope>
    <source>
        <strain>ATCC BAA-588 / NCTC 13252 / RB50</strain>
    </source>
</reference>
<sequence length="357" mass="39031">MAIQSDSLSSLPDSPRIVAPQPVSPNEESIERALRPKALEEYVGQQRAREQLEIFIAAARKRGEALDHVLLFGPPGLGKTTLAHIIAHEMGVQLRQTSGPVLERPGDLAALLTNLERNDVLFIDEIHRLSPVVEEILYPALEDFQIDILIGEGPAARSVKLDLQPFTLVGATTRAGMLTNPLRDRFGIVSRLEFYNTDELARIVTRSASLLNADITADGAHEVARRSRGTPRIANRLLRRVRDYAQVKAHGVIDQDAAGRALAMLDVDPQGLDVMDRKLLEAIVHKFDGGPVGVDSLAAAIGEERDTIEDVIEPYLIQHGYLQRTPRGRTATLTTWRHLGLTPPAAASGGTGELFSK</sequence>
<organism>
    <name type="scientific">Bordetella bronchiseptica (strain ATCC BAA-588 / NCTC 13252 / RB50)</name>
    <name type="common">Alcaligenes bronchisepticus</name>
    <dbReference type="NCBI Taxonomy" id="257310"/>
    <lineage>
        <taxon>Bacteria</taxon>
        <taxon>Pseudomonadati</taxon>
        <taxon>Pseudomonadota</taxon>
        <taxon>Betaproteobacteria</taxon>
        <taxon>Burkholderiales</taxon>
        <taxon>Alcaligenaceae</taxon>
        <taxon>Bordetella</taxon>
    </lineage>
</organism>
<keyword id="KW-0067">ATP-binding</keyword>
<keyword id="KW-0963">Cytoplasm</keyword>
<keyword id="KW-0227">DNA damage</keyword>
<keyword id="KW-0233">DNA recombination</keyword>
<keyword id="KW-0234">DNA repair</keyword>
<keyword id="KW-0238">DNA-binding</keyword>
<keyword id="KW-0378">Hydrolase</keyword>
<keyword id="KW-0547">Nucleotide-binding</keyword>